<proteinExistence type="inferred from homology"/>
<sequence length="282" mass="29956">MTTTSAPARNGTRRPSRPIVLLIPVPGSSVIHDLWAGTKLLVVFGISVLLTFYPGWVTIGMMAALVLAAARIAHIPRGALPSVPRWLWIVLAIGFLTAALAGGTPVVAVGGVQLGLGGALHFLRITALSVVLLALGAMVSWTTNVAEISPAVATLGRPFRVLRIPVDEWAVALALALRAFPMLIDEFQVLYAARRLRPKRMPPSRKARRQRHARELIDLLAAAITVTLRRADEMGDAITARGGTGQLSAHPGRPKLADWVTLAITAMASGTAVAIESLILHS</sequence>
<evidence type="ECO:0000255" key="1"/>
<evidence type="ECO:0000305" key="2"/>
<organism>
    <name type="scientific">Mycobacterium tuberculosis (strain CDC 1551 / Oshkosh)</name>
    <dbReference type="NCBI Taxonomy" id="83331"/>
    <lineage>
        <taxon>Bacteria</taxon>
        <taxon>Bacillati</taxon>
        <taxon>Actinomycetota</taxon>
        <taxon>Actinomycetes</taxon>
        <taxon>Mycobacteriales</taxon>
        <taxon>Mycobacteriaceae</taxon>
        <taxon>Mycobacterium</taxon>
        <taxon>Mycobacterium tuberculosis complex</taxon>
    </lineage>
</organism>
<feature type="chain" id="PRO_0000426945" description="Uncharacterized protein MT2387">
    <location>
        <begin position="1"/>
        <end position="282"/>
    </location>
</feature>
<feature type="transmembrane region" description="Helical" evidence="1">
    <location>
        <begin position="18"/>
        <end position="38"/>
    </location>
</feature>
<feature type="transmembrane region" description="Helical" evidence="1">
    <location>
        <begin position="40"/>
        <end position="60"/>
    </location>
</feature>
<feature type="transmembrane region" description="Helical" evidence="1">
    <location>
        <begin position="87"/>
        <end position="107"/>
    </location>
</feature>
<feature type="transmembrane region" description="Helical" evidence="1">
    <location>
        <begin position="119"/>
        <end position="139"/>
    </location>
</feature>
<feature type="transmembrane region" description="Helical" evidence="1">
    <location>
        <begin position="164"/>
        <end position="184"/>
    </location>
</feature>
<feature type="transmembrane region" description="Helical" evidence="1">
    <location>
        <begin position="260"/>
        <end position="280"/>
    </location>
</feature>
<keyword id="KW-1003">Cell membrane</keyword>
<keyword id="KW-0472">Membrane</keyword>
<keyword id="KW-1185">Reference proteome</keyword>
<keyword id="KW-0812">Transmembrane</keyword>
<keyword id="KW-1133">Transmembrane helix</keyword>
<reference key="1">
    <citation type="journal article" date="2002" name="J. Bacteriol.">
        <title>Whole-genome comparison of Mycobacterium tuberculosis clinical and laboratory strains.</title>
        <authorList>
            <person name="Fleischmann R.D."/>
            <person name="Alland D."/>
            <person name="Eisen J.A."/>
            <person name="Carpenter L."/>
            <person name="White O."/>
            <person name="Peterson J.D."/>
            <person name="DeBoy R.T."/>
            <person name="Dodson R.J."/>
            <person name="Gwinn M.L."/>
            <person name="Haft D.H."/>
            <person name="Hickey E.K."/>
            <person name="Kolonay J.F."/>
            <person name="Nelson W.C."/>
            <person name="Umayam L.A."/>
            <person name="Ermolaeva M.D."/>
            <person name="Salzberg S.L."/>
            <person name="Delcher A."/>
            <person name="Utterback T.R."/>
            <person name="Weidman J.F."/>
            <person name="Khouri H.M."/>
            <person name="Gill J."/>
            <person name="Mikula A."/>
            <person name="Bishai W."/>
            <person name="Jacobs W.R. Jr."/>
            <person name="Venter J.C."/>
            <person name="Fraser C.M."/>
        </authorList>
    </citation>
    <scope>NUCLEOTIDE SEQUENCE [LARGE SCALE GENOMIC DNA]</scope>
    <source>
        <strain>CDC 1551 / Oshkosh</strain>
    </source>
</reference>
<accession>P9WPI6</accession>
<accession>L0TBZ8</accession>
<accession>P64997</accession>
<accession>P71887</accession>
<dbReference type="EMBL" id="AE000516">
    <property type="protein sequence ID" value="AAK46679.1"/>
    <property type="molecule type" value="Genomic_DNA"/>
</dbReference>
<dbReference type="PIR" id="F70704">
    <property type="entry name" value="F70704"/>
</dbReference>
<dbReference type="RefSeq" id="WP_003411966.1">
    <property type="nucleotide sequence ID" value="NZ_KK341227.1"/>
</dbReference>
<dbReference type="SMR" id="P9WPI6"/>
<dbReference type="KEGG" id="mtc:MT2387"/>
<dbReference type="PATRIC" id="fig|83331.31.peg.2572"/>
<dbReference type="HOGENOM" id="CLU_065307_0_0_11"/>
<dbReference type="Proteomes" id="UP000001020">
    <property type="component" value="Chromosome"/>
</dbReference>
<dbReference type="GO" id="GO:0005886">
    <property type="term" value="C:plasma membrane"/>
    <property type="evidence" value="ECO:0007669"/>
    <property type="project" value="UniProtKB-SubCell"/>
</dbReference>
<dbReference type="CDD" id="cd16914">
    <property type="entry name" value="EcfT"/>
    <property type="match status" value="1"/>
</dbReference>
<dbReference type="InterPro" id="IPR003339">
    <property type="entry name" value="ABC/ECF_trnsptr_transmembrane"/>
</dbReference>
<dbReference type="PANTHER" id="PTHR33514">
    <property type="entry name" value="PROTEIN ABCI12, CHLOROPLASTIC"/>
    <property type="match status" value="1"/>
</dbReference>
<dbReference type="PANTHER" id="PTHR33514:SF13">
    <property type="entry name" value="PROTEIN ABCI12, CHLOROPLASTIC"/>
    <property type="match status" value="1"/>
</dbReference>
<dbReference type="Pfam" id="PF02361">
    <property type="entry name" value="CbiQ"/>
    <property type="match status" value="1"/>
</dbReference>
<comment type="subcellular location">
    <subcellularLocation>
        <location evidence="2">Cell membrane</location>
        <topology evidence="2">Multi-pass membrane protein</topology>
    </subcellularLocation>
</comment>
<comment type="similarity">
    <text evidence="2">Belongs to the CbiQ family.</text>
</comment>
<name>Y2325_MYCTO</name>
<gene>
    <name type="ordered locus">MT2387</name>
</gene>
<protein>
    <recommendedName>
        <fullName>Uncharacterized protein MT2387</fullName>
    </recommendedName>
</protein>